<comment type="function">
    <text evidence="1">RuBisCO catalyzes two reactions: the carboxylation of D-ribulose 1,5-bisphosphate, the primary event in carbon dioxide fixation, as well as the oxidative fragmentation of the pentose substrate in the photorespiration process. Both reactions occur simultaneously and in competition at the same active site.</text>
</comment>
<comment type="catalytic activity">
    <reaction evidence="1">
        <text>2 (2R)-3-phosphoglycerate + 2 H(+) = D-ribulose 1,5-bisphosphate + CO2 + H2O</text>
        <dbReference type="Rhea" id="RHEA:23124"/>
        <dbReference type="ChEBI" id="CHEBI:15377"/>
        <dbReference type="ChEBI" id="CHEBI:15378"/>
        <dbReference type="ChEBI" id="CHEBI:16526"/>
        <dbReference type="ChEBI" id="CHEBI:57870"/>
        <dbReference type="ChEBI" id="CHEBI:58272"/>
        <dbReference type="EC" id="4.1.1.39"/>
    </reaction>
</comment>
<comment type="catalytic activity">
    <reaction evidence="1">
        <text>D-ribulose 1,5-bisphosphate + O2 = 2-phosphoglycolate + (2R)-3-phosphoglycerate + 2 H(+)</text>
        <dbReference type="Rhea" id="RHEA:36631"/>
        <dbReference type="ChEBI" id="CHEBI:15378"/>
        <dbReference type="ChEBI" id="CHEBI:15379"/>
        <dbReference type="ChEBI" id="CHEBI:57870"/>
        <dbReference type="ChEBI" id="CHEBI:58033"/>
        <dbReference type="ChEBI" id="CHEBI:58272"/>
    </reaction>
</comment>
<comment type="cofactor">
    <cofactor evidence="1">
        <name>Mg(2+)</name>
        <dbReference type="ChEBI" id="CHEBI:18420"/>
    </cofactor>
    <text evidence="1">Binds 1 Mg(2+) ion per subunit.</text>
</comment>
<comment type="subunit">
    <text evidence="1">Heterohexadecamer of 8 large chains and 8 small chains.</text>
</comment>
<comment type="subcellular location">
    <subcellularLocation>
        <location>Plastid</location>
        <location>Chloroplast</location>
    </subcellularLocation>
</comment>
<comment type="miscellaneous">
    <text evidence="1">The basic functional RuBisCO is composed of a large chain homodimer in a 'head-to-tail' conformation. In form I RuBisCO this homodimer is arranged in a barrel-like tetramer with the small subunits forming a tetrameric 'cap' on each end of the 'barrel'.</text>
</comment>
<comment type="similarity">
    <text evidence="1">Belongs to the RuBisCO large chain family. Type I subfamily.</text>
</comment>
<proteinExistence type="inferred from homology"/>
<gene>
    <name evidence="1" type="primary">rbcL</name>
</gene>
<evidence type="ECO:0000255" key="1">
    <source>
        <dbReference type="HAMAP-Rule" id="MF_01338"/>
    </source>
</evidence>
<geneLocation type="chloroplast"/>
<keyword id="KW-0113">Calvin cycle</keyword>
<keyword id="KW-0120">Carbon dioxide fixation</keyword>
<keyword id="KW-0150">Chloroplast</keyword>
<keyword id="KW-0456">Lyase</keyword>
<keyword id="KW-0460">Magnesium</keyword>
<keyword id="KW-0479">Metal-binding</keyword>
<keyword id="KW-0503">Monooxygenase</keyword>
<keyword id="KW-0560">Oxidoreductase</keyword>
<keyword id="KW-0601">Photorespiration</keyword>
<keyword id="KW-0602">Photosynthesis</keyword>
<keyword id="KW-0934">Plastid</keyword>
<reference key="1">
    <citation type="journal article" date="2007" name="Mol. Biol. Evol.">
        <title>Plastid genome sequence of the cryptophyte alga Rhodomonas salina CCMP1319: lateral transfer of putative DNA replication machinery and a test of chromist plastid phylogeny.</title>
        <authorList>
            <person name="Khan H."/>
            <person name="Parks N."/>
            <person name="Kozera C."/>
            <person name="Curtis B.A."/>
            <person name="Parsons B.J."/>
            <person name="Bowman S."/>
            <person name="Archibald J.M."/>
        </authorList>
    </citation>
    <scope>NUCLEOTIDE SEQUENCE [LARGE SCALE GENOMIC DNA]</scope>
    <source>
        <strain>CCMP1319 / NEPCC76 / CS-174</strain>
    </source>
</reference>
<name>RBL_RHDSA</name>
<accession>A6MVT9</accession>
<protein>
    <recommendedName>
        <fullName evidence="1">Ribulose bisphosphate carboxylase large chain</fullName>
        <shortName evidence="1">RuBisCO large subunit</shortName>
        <ecNumber evidence="1">4.1.1.39</ecNumber>
    </recommendedName>
</protein>
<feature type="chain" id="PRO_0000355801" description="Ribulose bisphosphate carboxylase large chain">
    <location>
        <begin position="1"/>
        <end position="488"/>
    </location>
</feature>
<feature type="active site" description="Proton acceptor" evidence="1">
    <location>
        <position position="179"/>
    </location>
</feature>
<feature type="active site" description="Proton acceptor" evidence="1">
    <location>
        <position position="297"/>
    </location>
</feature>
<feature type="binding site" description="in homodimeric partner" evidence="1">
    <location>
        <position position="127"/>
    </location>
    <ligand>
        <name>substrate</name>
    </ligand>
</feature>
<feature type="binding site" evidence="1">
    <location>
        <position position="177"/>
    </location>
    <ligand>
        <name>substrate</name>
    </ligand>
</feature>
<feature type="binding site" evidence="1">
    <location>
        <position position="181"/>
    </location>
    <ligand>
        <name>substrate</name>
    </ligand>
</feature>
<feature type="binding site" description="via carbamate group" evidence="1">
    <location>
        <position position="205"/>
    </location>
    <ligand>
        <name>Mg(2+)</name>
        <dbReference type="ChEBI" id="CHEBI:18420"/>
    </ligand>
</feature>
<feature type="binding site" evidence="1">
    <location>
        <position position="207"/>
    </location>
    <ligand>
        <name>Mg(2+)</name>
        <dbReference type="ChEBI" id="CHEBI:18420"/>
    </ligand>
</feature>
<feature type="binding site" evidence="1">
    <location>
        <position position="208"/>
    </location>
    <ligand>
        <name>Mg(2+)</name>
        <dbReference type="ChEBI" id="CHEBI:18420"/>
    </ligand>
</feature>
<feature type="binding site" evidence="1">
    <location>
        <position position="298"/>
    </location>
    <ligand>
        <name>substrate</name>
    </ligand>
</feature>
<feature type="binding site" evidence="1">
    <location>
        <position position="330"/>
    </location>
    <ligand>
        <name>substrate</name>
    </ligand>
</feature>
<feature type="binding site" evidence="1">
    <location>
        <position position="382"/>
    </location>
    <ligand>
        <name>substrate</name>
    </ligand>
</feature>
<feature type="site" description="Transition state stabilizer" evidence="1">
    <location>
        <position position="337"/>
    </location>
</feature>
<feature type="modified residue" description="N6-carboxylysine" evidence="1">
    <location>
        <position position="205"/>
    </location>
</feature>
<sequence>MSQSVESRTRIKNERYESGVIPYAKMGYWDADYQIKDTDVLAMFRMTPQKGVDPVECAAAIAGESSTATWTVVWTDLLTACDLYRAKAYRVDPVPGAADQYFAYIAYELDLFEEGSLANLTASIIGNVFGFKAVNALRLEDMRMPVAYLKTFQGPATGVIVERERLDKYGRPLLGATVKPKLGLSGKNYGRVVYEGLKGGLDFLKDDENINSQPFMRWKERFLFGMEGVNRAAAGTGEIKGHYFNITAGTMEDMYERAEFCKEIGTVICMIDLVIGYTAIQSMGIWARKNSMILHLHRAGNSTYSRQKTHGMNFRVICKWMRMAGVDHIHAGTVVGKLEGDPLMVKGFYDTLLEVKTEVNLVEGLFFAQDWASLAKCMPVASGGIHCGQMHQLINYLGDDVVLQFGGGTIGHPDGIQSGATANRVALECMVIARNEGRDYVNEGPDILRTAAKSCGPLQSALDLWKDITFNYASTDTADFVETATANR</sequence>
<organism>
    <name type="scientific">Rhodomonas salina</name>
    <name type="common">Cryptomonas salina</name>
    <dbReference type="NCBI Taxonomy" id="52970"/>
    <lineage>
        <taxon>Eukaryota</taxon>
        <taxon>Cryptophyceae</taxon>
        <taxon>Pyrenomonadales</taxon>
        <taxon>Pyrenomonadaceae</taxon>
        <taxon>Rhodomonas</taxon>
    </lineage>
</organism>
<dbReference type="EC" id="4.1.1.39" evidence="1"/>
<dbReference type="EMBL" id="EF508371">
    <property type="protein sequence ID" value="ABO70740.1"/>
    <property type="molecule type" value="Genomic_DNA"/>
</dbReference>
<dbReference type="RefSeq" id="YP_001293518.1">
    <property type="nucleotide sequence ID" value="NC_009573.1"/>
</dbReference>
<dbReference type="SMR" id="A6MVT9"/>
<dbReference type="GeneID" id="5228603"/>
<dbReference type="GO" id="GO:0009507">
    <property type="term" value="C:chloroplast"/>
    <property type="evidence" value="ECO:0007669"/>
    <property type="project" value="UniProtKB-SubCell"/>
</dbReference>
<dbReference type="GO" id="GO:0000287">
    <property type="term" value="F:magnesium ion binding"/>
    <property type="evidence" value="ECO:0007669"/>
    <property type="project" value="UniProtKB-UniRule"/>
</dbReference>
<dbReference type="GO" id="GO:0004497">
    <property type="term" value="F:monooxygenase activity"/>
    <property type="evidence" value="ECO:0007669"/>
    <property type="project" value="UniProtKB-KW"/>
</dbReference>
<dbReference type="GO" id="GO:0016984">
    <property type="term" value="F:ribulose-bisphosphate carboxylase activity"/>
    <property type="evidence" value="ECO:0007669"/>
    <property type="project" value="UniProtKB-UniRule"/>
</dbReference>
<dbReference type="GO" id="GO:0019253">
    <property type="term" value="P:reductive pentose-phosphate cycle"/>
    <property type="evidence" value="ECO:0007669"/>
    <property type="project" value="UniProtKB-UniRule"/>
</dbReference>
<dbReference type="CDD" id="cd08212">
    <property type="entry name" value="RuBisCO_large_I"/>
    <property type="match status" value="1"/>
</dbReference>
<dbReference type="Gene3D" id="3.20.20.110">
    <property type="entry name" value="Ribulose bisphosphate carboxylase, large subunit, C-terminal domain"/>
    <property type="match status" value="1"/>
</dbReference>
<dbReference type="Gene3D" id="3.30.70.150">
    <property type="entry name" value="RuBisCO large subunit, N-terminal domain"/>
    <property type="match status" value="1"/>
</dbReference>
<dbReference type="HAMAP" id="MF_01338">
    <property type="entry name" value="RuBisCO_L_type1"/>
    <property type="match status" value="1"/>
</dbReference>
<dbReference type="InterPro" id="IPR033966">
    <property type="entry name" value="RuBisCO"/>
</dbReference>
<dbReference type="InterPro" id="IPR020878">
    <property type="entry name" value="RuBisCo_large_chain_AS"/>
</dbReference>
<dbReference type="InterPro" id="IPR000685">
    <property type="entry name" value="RuBisCO_lsu_C"/>
</dbReference>
<dbReference type="InterPro" id="IPR036376">
    <property type="entry name" value="RuBisCO_lsu_C_sf"/>
</dbReference>
<dbReference type="InterPro" id="IPR017443">
    <property type="entry name" value="RuBisCO_lsu_fd_N"/>
</dbReference>
<dbReference type="InterPro" id="IPR036422">
    <property type="entry name" value="RuBisCO_lsu_N_sf"/>
</dbReference>
<dbReference type="InterPro" id="IPR020888">
    <property type="entry name" value="RuBisCO_lsuI"/>
</dbReference>
<dbReference type="NCBIfam" id="NF003252">
    <property type="entry name" value="PRK04208.1"/>
    <property type="match status" value="1"/>
</dbReference>
<dbReference type="PANTHER" id="PTHR42704">
    <property type="entry name" value="RIBULOSE BISPHOSPHATE CARBOXYLASE"/>
    <property type="match status" value="1"/>
</dbReference>
<dbReference type="PANTHER" id="PTHR42704:SF17">
    <property type="entry name" value="RIBULOSE BISPHOSPHATE CARBOXYLASE LARGE CHAIN"/>
    <property type="match status" value="1"/>
</dbReference>
<dbReference type="Pfam" id="PF00016">
    <property type="entry name" value="RuBisCO_large"/>
    <property type="match status" value="1"/>
</dbReference>
<dbReference type="Pfam" id="PF02788">
    <property type="entry name" value="RuBisCO_large_N"/>
    <property type="match status" value="1"/>
</dbReference>
<dbReference type="SFLD" id="SFLDG01052">
    <property type="entry name" value="RuBisCO"/>
    <property type="match status" value="1"/>
</dbReference>
<dbReference type="SFLD" id="SFLDS00014">
    <property type="entry name" value="RuBisCO"/>
    <property type="match status" value="1"/>
</dbReference>
<dbReference type="SFLD" id="SFLDG00301">
    <property type="entry name" value="RuBisCO-like_proteins"/>
    <property type="match status" value="1"/>
</dbReference>
<dbReference type="SUPFAM" id="SSF51649">
    <property type="entry name" value="RuBisCo, C-terminal domain"/>
    <property type="match status" value="1"/>
</dbReference>
<dbReference type="SUPFAM" id="SSF54966">
    <property type="entry name" value="RuBisCO, large subunit, small (N-terminal) domain"/>
    <property type="match status" value="1"/>
</dbReference>
<dbReference type="PROSITE" id="PS00157">
    <property type="entry name" value="RUBISCO_LARGE"/>
    <property type="match status" value="1"/>
</dbReference>